<sequence>MARFFRRRKFCRFTAEDVKEIDFKDLNTLKAYVSETGKIVPSRITGTKARYQRQLATAIKRARFLALLPYTDSHGR</sequence>
<proteinExistence type="inferred from homology"/>
<comment type="function">
    <text evidence="1">Binds as a heterodimer with protein bS6 to the central domain of the 16S rRNA, where it helps stabilize the platform of the 30S subunit.</text>
</comment>
<comment type="subunit">
    <text evidence="1">Part of the 30S ribosomal subunit. Forms a tight heterodimer with protein bS6.</text>
</comment>
<comment type="similarity">
    <text evidence="1">Belongs to the bacterial ribosomal protein bS18 family.</text>
</comment>
<evidence type="ECO:0000255" key="1">
    <source>
        <dbReference type="HAMAP-Rule" id="MF_00270"/>
    </source>
</evidence>
<evidence type="ECO:0000305" key="2"/>
<organism>
    <name type="scientific">Pseudomonas putida (strain ATCC 47054 / DSM 6125 / CFBP 8728 / NCIMB 11950 / KT2440)</name>
    <dbReference type="NCBI Taxonomy" id="160488"/>
    <lineage>
        <taxon>Bacteria</taxon>
        <taxon>Pseudomonadati</taxon>
        <taxon>Pseudomonadota</taxon>
        <taxon>Gammaproteobacteria</taxon>
        <taxon>Pseudomonadales</taxon>
        <taxon>Pseudomonadaceae</taxon>
        <taxon>Pseudomonas</taxon>
    </lineage>
</organism>
<gene>
    <name evidence="1" type="primary">rpsR</name>
    <name type="ordered locus">PP_4876</name>
</gene>
<feature type="chain" id="PRO_0000111210" description="Small ribosomal subunit protein bS18">
    <location>
        <begin position="1"/>
        <end position="76"/>
    </location>
</feature>
<keyword id="KW-1185">Reference proteome</keyword>
<keyword id="KW-0687">Ribonucleoprotein</keyword>
<keyword id="KW-0689">Ribosomal protein</keyword>
<keyword id="KW-0694">RNA-binding</keyword>
<keyword id="KW-0699">rRNA-binding</keyword>
<accession>Q88DE9</accession>
<dbReference type="EMBL" id="AE015451">
    <property type="protein sequence ID" value="AAN70445.1"/>
    <property type="molecule type" value="Genomic_DNA"/>
</dbReference>
<dbReference type="RefSeq" id="NP_746981.1">
    <property type="nucleotide sequence ID" value="NC_002947.4"/>
</dbReference>
<dbReference type="RefSeq" id="WP_003249563.1">
    <property type="nucleotide sequence ID" value="NZ_CP169744.1"/>
</dbReference>
<dbReference type="SMR" id="Q88DE9"/>
<dbReference type="STRING" id="160488.PP_4876"/>
<dbReference type="PaxDb" id="160488-PP_4876"/>
<dbReference type="GeneID" id="97170237"/>
<dbReference type="KEGG" id="ppu:PP_4876"/>
<dbReference type="PATRIC" id="fig|160488.4.peg.5208"/>
<dbReference type="eggNOG" id="COG0238">
    <property type="taxonomic scope" value="Bacteria"/>
</dbReference>
<dbReference type="HOGENOM" id="CLU_148710_2_3_6"/>
<dbReference type="OrthoDB" id="9812008at2"/>
<dbReference type="PhylomeDB" id="Q88DE9"/>
<dbReference type="BioCyc" id="PPUT160488:G1G01-5216-MONOMER"/>
<dbReference type="Proteomes" id="UP000000556">
    <property type="component" value="Chromosome"/>
</dbReference>
<dbReference type="GO" id="GO:0022627">
    <property type="term" value="C:cytosolic small ribosomal subunit"/>
    <property type="evidence" value="ECO:0007669"/>
    <property type="project" value="TreeGrafter"/>
</dbReference>
<dbReference type="GO" id="GO:0070181">
    <property type="term" value="F:small ribosomal subunit rRNA binding"/>
    <property type="evidence" value="ECO:0007669"/>
    <property type="project" value="TreeGrafter"/>
</dbReference>
<dbReference type="GO" id="GO:0003735">
    <property type="term" value="F:structural constituent of ribosome"/>
    <property type="evidence" value="ECO:0007669"/>
    <property type="project" value="InterPro"/>
</dbReference>
<dbReference type="GO" id="GO:0006412">
    <property type="term" value="P:translation"/>
    <property type="evidence" value="ECO:0007669"/>
    <property type="project" value="UniProtKB-UniRule"/>
</dbReference>
<dbReference type="FunFam" id="4.10.640.10:FF:000001">
    <property type="entry name" value="30S ribosomal protein S18"/>
    <property type="match status" value="1"/>
</dbReference>
<dbReference type="Gene3D" id="4.10.640.10">
    <property type="entry name" value="Ribosomal protein S18"/>
    <property type="match status" value="1"/>
</dbReference>
<dbReference type="HAMAP" id="MF_00270">
    <property type="entry name" value="Ribosomal_bS18"/>
    <property type="match status" value="1"/>
</dbReference>
<dbReference type="InterPro" id="IPR001648">
    <property type="entry name" value="Ribosomal_bS18"/>
</dbReference>
<dbReference type="InterPro" id="IPR018275">
    <property type="entry name" value="Ribosomal_bS18_CS"/>
</dbReference>
<dbReference type="InterPro" id="IPR036870">
    <property type="entry name" value="Ribosomal_bS18_sf"/>
</dbReference>
<dbReference type="NCBIfam" id="TIGR00165">
    <property type="entry name" value="S18"/>
    <property type="match status" value="1"/>
</dbReference>
<dbReference type="PANTHER" id="PTHR13479">
    <property type="entry name" value="30S RIBOSOMAL PROTEIN S18"/>
    <property type="match status" value="1"/>
</dbReference>
<dbReference type="PANTHER" id="PTHR13479:SF40">
    <property type="entry name" value="SMALL RIBOSOMAL SUBUNIT PROTEIN BS18M"/>
    <property type="match status" value="1"/>
</dbReference>
<dbReference type="Pfam" id="PF01084">
    <property type="entry name" value="Ribosomal_S18"/>
    <property type="match status" value="1"/>
</dbReference>
<dbReference type="PRINTS" id="PR00974">
    <property type="entry name" value="RIBOSOMALS18"/>
</dbReference>
<dbReference type="SUPFAM" id="SSF46911">
    <property type="entry name" value="Ribosomal protein S18"/>
    <property type="match status" value="1"/>
</dbReference>
<dbReference type="PROSITE" id="PS00057">
    <property type="entry name" value="RIBOSOMAL_S18"/>
    <property type="match status" value="1"/>
</dbReference>
<name>RS18_PSEPK</name>
<protein>
    <recommendedName>
        <fullName evidence="1">Small ribosomal subunit protein bS18</fullName>
    </recommendedName>
    <alternativeName>
        <fullName evidence="2">30S ribosomal protein S18</fullName>
    </alternativeName>
</protein>
<reference key="1">
    <citation type="journal article" date="2002" name="Environ. Microbiol.">
        <title>Complete genome sequence and comparative analysis of the metabolically versatile Pseudomonas putida KT2440.</title>
        <authorList>
            <person name="Nelson K.E."/>
            <person name="Weinel C."/>
            <person name="Paulsen I.T."/>
            <person name="Dodson R.J."/>
            <person name="Hilbert H."/>
            <person name="Martins dos Santos V.A.P."/>
            <person name="Fouts D.E."/>
            <person name="Gill S.R."/>
            <person name="Pop M."/>
            <person name="Holmes M."/>
            <person name="Brinkac L.M."/>
            <person name="Beanan M.J."/>
            <person name="DeBoy R.T."/>
            <person name="Daugherty S.C."/>
            <person name="Kolonay J.F."/>
            <person name="Madupu R."/>
            <person name="Nelson W.C."/>
            <person name="White O."/>
            <person name="Peterson J.D."/>
            <person name="Khouri H.M."/>
            <person name="Hance I."/>
            <person name="Chris Lee P."/>
            <person name="Holtzapple E.K."/>
            <person name="Scanlan D."/>
            <person name="Tran K."/>
            <person name="Moazzez A."/>
            <person name="Utterback T.R."/>
            <person name="Rizzo M."/>
            <person name="Lee K."/>
            <person name="Kosack D."/>
            <person name="Moestl D."/>
            <person name="Wedler H."/>
            <person name="Lauber J."/>
            <person name="Stjepandic D."/>
            <person name="Hoheisel J."/>
            <person name="Straetz M."/>
            <person name="Heim S."/>
            <person name="Kiewitz C."/>
            <person name="Eisen J.A."/>
            <person name="Timmis K.N."/>
            <person name="Duesterhoeft A."/>
            <person name="Tuemmler B."/>
            <person name="Fraser C.M."/>
        </authorList>
    </citation>
    <scope>NUCLEOTIDE SEQUENCE [LARGE SCALE GENOMIC DNA]</scope>
    <source>
        <strain>ATCC 47054 / DSM 6125 / CFBP 8728 / NCIMB 11950 / KT2440</strain>
    </source>
</reference>